<gene>
    <name type="primary">tf2</name>
</gene>
<proteinExistence type="evidence at protein level"/>
<reference key="1">
    <citation type="journal article" date="1993" name="Mol. Mar. Biol. Biotechnol.">
        <title>Cloning and characterization of Atlantic salmon (Salmo salar) serum transferrin cDNA.</title>
        <authorList>
            <person name="Kvingedal A.M."/>
            <person name="Roervik K.A."/>
            <person name="Alestroem P."/>
        </authorList>
    </citation>
    <scope>NUCLEOTIDE SEQUENCE [MRNA]</scope>
    <source>
        <tissue>Liver</tissue>
    </source>
</reference>
<reference key="2">
    <citation type="journal article" date="1995" name="Fish Shellfish Immunol.">
        <title>Immunoassay and partial characterization of serum transferrin from Atlantic salon (Salmo salr L.).</title>
        <authorList>
            <person name="Roeed K.H."/>
            <person name="Dehli A.K."/>
            <person name="Flengsrud R."/>
            <person name="Midthjell L."/>
            <person name="Roervik K.A."/>
        </authorList>
    </citation>
    <scope>PROTEIN SEQUENCE OF 19-37</scope>
    <source>
        <tissue>Serum</tissue>
    </source>
</reference>
<name>TRFE2_SALSA</name>
<keyword id="KW-0903">Direct protein sequencing</keyword>
<keyword id="KW-1015">Disulfide bond</keyword>
<keyword id="KW-0325">Glycoprotein</keyword>
<keyword id="KW-0406">Ion transport</keyword>
<keyword id="KW-0408">Iron</keyword>
<keyword id="KW-0410">Iron transport</keyword>
<keyword id="KW-0479">Metal-binding</keyword>
<keyword id="KW-1185">Reference proteome</keyword>
<keyword id="KW-0677">Repeat</keyword>
<keyword id="KW-0964">Secreted</keyword>
<keyword id="KW-0732">Signal</keyword>
<keyword id="KW-0813">Transport</keyword>
<organism>
    <name type="scientific">Salmo salar</name>
    <name type="common">Atlantic salmon</name>
    <dbReference type="NCBI Taxonomy" id="8030"/>
    <lineage>
        <taxon>Eukaryota</taxon>
        <taxon>Metazoa</taxon>
        <taxon>Chordata</taxon>
        <taxon>Craniata</taxon>
        <taxon>Vertebrata</taxon>
        <taxon>Euteleostomi</taxon>
        <taxon>Actinopterygii</taxon>
        <taxon>Neopterygii</taxon>
        <taxon>Teleostei</taxon>
        <taxon>Protacanthopterygii</taxon>
        <taxon>Salmoniformes</taxon>
        <taxon>Salmonidae</taxon>
        <taxon>Salmoninae</taxon>
        <taxon>Salmo</taxon>
    </lineage>
</organism>
<protein>
    <recommendedName>
        <fullName>Serotransferrin-2</fullName>
    </recommendedName>
    <alternativeName>
        <fullName>Serotransferrin II</fullName>
        <shortName>STF II</shortName>
        <shortName>sTF2</shortName>
    </alternativeName>
    <alternativeName>
        <fullName>Siderophilin II</fullName>
    </alternativeName>
</protein>
<evidence type="ECO:0000255" key="1"/>
<evidence type="ECO:0000255" key="2">
    <source>
        <dbReference type="PROSITE-ProRule" id="PRU00741"/>
    </source>
</evidence>
<evidence type="ECO:0000269" key="3">
    <source ref="2"/>
</evidence>
<feature type="signal peptide" evidence="3">
    <location>
        <begin position="1"/>
        <end position="18"/>
    </location>
</feature>
<feature type="chain" id="PRO_0000035725" description="Serotransferrin-2">
    <location>
        <begin position="19"/>
        <end position="691"/>
    </location>
</feature>
<feature type="domain" description="Transferrin-like 1" evidence="2">
    <location>
        <begin position="25"/>
        <end position="329"/>
    </location>
</feature>
<feature type="domain" description="Transferrin-like 2" evidence="2">
    <location>
        <begin position="340"/>
        <end position="670"/>
    </location>
</feature>
<feature type="binding site" evidence="2">
    <location>
        <position position="74"/>
    </location>
    <ligand>
        <name>Fe(3+)</name>
        <dbReference type="ChEBI" id="CHEBI:29034"/>
        <label>1</label>
    </ligand>
</feature>
<feature type="binding site" evidence="2">
    <location>
        <position position="104"/>
    </location>
    <ligand>
        <name>Fe(3+)</name>
        <dbReference type="ChEBI" id="CHEBI:29034"/>
        <label>1</label>
    </ligand>
</feature>
<feature type="binding site" evidence="2">
    <location>
        <position position="129"/>
    </location>
    <ligand>
        <name>hydrogencarbonate</name>
        <dbReference type="ChEBI" id="CHEBI:17544"/>
        <label>1</label>
    </ligand>
</feature>
<feature type="binding site" evidence="2">
    <location>
        <position position="134"/>
    </location>
    <ligand>
        <name>hydrogencarbonate</name>
        <dbReference type="ChEBI" id="CHEBI:17544"/>
        <label>1</label>
    </ligand>
</feature>
<feature type="binding site" evidence="2">
    <location>
        <position position="136"/>
    </location>
    <ligand>
        <name>hydrogencarbonate</name>
        <dbReference type="ChEBI" id="CHEBI:17544"/>
        <label>1</label>
    </ligand>
</feature>
<feature type="binding site" evidence="2">
    <location>
        <position position="137"/>
    </location>
    <ligand>
        <name>hydrogencarbonate</name>
        <dbReference type="ChEBI" id="CHEBI:17544"/>
        <label>1</label>
    </ligand>
</feature>
<feature type="binding site" evidence="2">
    <location>
        <position position="201"/>
    </location>
    <ligand>
        <name>Fe(3+)</name>
        <dbReference type="ChEBI" id="CHEBI:29034"/>
        <label>1</label>
    </ligand>
</feature>
<feature type="binding site" evidence="2">
    <location>
        <position position="257"/>
    </location>
    <ligand>
        <name>Fe(3+)</name>
        <dbReference type="ChEBI" id="CHEBI:29034"/>
        <label>1</label>
    </ligand>
</feature>
<feature type="binding site" evidence="2">
    <location>
        <position position="394"/>
    </location>
    <ligand>
        <name>Fe(3+)</name>
        <dbReference type="ChEBI" id="CHEBI:29034"/>
        <label>2</label>
    </ligand>
</feature>
<feature type="binding site" evidence="2">
    <location>
        <position position="428"/>
    </location>
    <ligand>
        <name>Fe(3+)</name>
        <dbReference type="ChEBI" id="CHEBI:29034"/>
        <label>2</label>
    </ligand>
</feature>
<feature type="binding site" evidence="2">
    <location>
        <position position="453"/>
    </location>
    <ligand>
        <name>hydrogencarbonate</name>
        <dbReference type="ChEBI" id="CHEBI:17544"/>
        <label>2</label>
    </ligand>
</feature>
<feature type="binding site" evidence="2">
    <location>
        <position position="457"/>
    </location>
    <ligand>
        <name>hydrogencarbonate</name>
        <dbReference type="ChEBI" id="CHEBI:17544"/>
        <label>2</label>
    </ligand>
</feature>
<feature type="binding site" evidence="2">
    <location>
        <position position="459"/>
    </location>
    <ligand>
        <name>hydrogencarbonate</name>
        <dbReference type="ChEBI" id="CHEBI:17544"/>
        <label>2</label>
    </ligand>
</feature>
<feature type="binding site" evidence="2">
    <location>
        <position position="460"/>
    </location>
    <ligand>
        <name>hydrogencarbonate</name>
        <dbReference type="ChEBI" id="CHEBI:17544"/>
        <label>2</label>
    </ligand>
</feature>
<feature type="binding site" evidence="2">
    <location>
        <position position="524"/>
    </location>
    <ligand>
        <name>Fe(3+)</name>
        <dbReference type="ChEBI" id="CHEBI:29034"/>
        <label>2</label>
    </ligand>
</feature>
<feature type="binding site" evidence="2">
    <location>
        <position position="592"/>
    </location>
    <ligand>
        <name>Fe(3+)</name>
        <dbReference type="ChEBI" id="CHEBI:29034"/>
        <label>2</label>
    </ligand>
</feature>
<feature type="glycosylation site" description="N-linked (GlcNAc...) asparagine" evidence="1">
    <location>
        <position position="169"/>
    </location>
</feature>
<feature type="disulfide bond" evidence="2">
    <location>
        <begin position="28"/>
        <end position="50"/>
    </location>
</feature>
<feature type="disulfide bond" evidence="2">
    <location>
        <begin position="127"/>
        <end position="207"/>
    </location>
</feature>
<feature type="disulfide bond" evidence="2">
    <location>
        <begin position="172"/>
        <end position="186"/>
    </location>
</feature>
<feature type="disulfide bond" evidence="2">
    <location>
        <begin position="235"/>
        <end position="249"/>
    </location>
</feature>
<feature type="disulfide bond" evidence="2">
    <location>
        <begin position="343"/>
        <end position="379"/>
    </location>
</feature>
<feature type="disulfide bond" evidence="2">
    <location>
        <begin position="353"/>
        <end position="370"/>
    </location>
</feature>
<feature type="disulfide bond" evidence="2">
    <location>
        <begin position="404"/>
        <end position="682"/>
    </location>
</feature>
<feature type="disulfide bond" evidence="2">
    <location>
        <begin position="419"/>
        <end position="643"/>
    </location>
</feature>
<feature type="disulfide bond" evidence="2">
    <location>
        <begin position="451"/>
        <end position="530"/>
    </location>
</feature>
<feature type="disulfide bond" evidence="2">
    <location>
        <begin position="475"/>
        <end position="671"/>
    </location>
</feature>
<feature type="disulfide bond" evidence="2">
    <location>
        <begin position="485"/>
        <end position="499"/>
    </location>
</feature>
<feature type="disulfide bond" evidence="2">
    <location>
        <begin position="496"/>
        <end position="513"/>
    </location>
</feature>
<feature type="disulfide bond" evidence="2">
    <location>
        <begin position="570"/>
        <end position="584"/>
    </location>
</feature>
<sequence>MKLLLLSALLGCLATAYAAPAEGIVKWCVKSEQELRKCHDLAAKVAEFSCVRKDGSFECIQAIKGGEADAITLDGGDIYTAGLTNYGLQPIIAEDYGEDSDTCYYAVAVAKKGTAFGFKTLRGKKSCHTGLGKSAGWNIPIGTLVTESQIRWAGIEDRPVESAVSDFFNASCAPGATMGSKLCQLCKGDCSRSHKEPYYDYAGAFQCLKDGAGDVAFIKPLAVPAAEKASYELLCKDGTRASIDSYKTCHLARVPAHAVVSRKDPELANRIYNKLVAVKDFNLFSSDGYAAKNLMFKDSAQKLVQLPTTTDSFLYLGAEYMSTIRSLKKSQATGASSRAIKWCAVGHAEKGKCDTWTINSFADGESKISCQDAPTVEECIKKIMRKEADAIAVDGGEVYTAGKCGLVPVMVEQYDADLCSAPGEASSYYAVAVAKKGSGLTWKTLKGKRSCHTGLGRTAGWNIPMGLIHQETNDCDFTKYFSKGCAPGSEVGSPFCAQCKGSGKARGGDEDRCKARSEEQYYGYTGAFRCLVEDAGDVAFIKHTIVPESTDGNGPDWAKDLKSSDFELLCQDGTTQPVTKFSECHLAKVPAHAVITRPETRGDVVSILLELQAKFGSSGSDSSFRMFQSSVEKNLLFKDSTKCLQEIPKGTKYQDFLGKEYMIAMQSLRKCSDSTSDLEKACTFHSCQQKE</sequence>
<dbReference type="SMR" id="P80429"/>
<dbReference type="MEROPS" id="S60.970"/>
<dbReference type="GlyCosmos" id="P80429">
    <property type="glycosylation" value="1 site, No reported glycans"/>
</dbReference>
<dbReference type="Proteomes" id="UP000087266">
    <property type="component" value="Unplaced"/>
</dbReference>
<dbReference type="GO" id="GO:0005769">
    <property type="term" value="C:early endosome"/>
    <property type="evidence" value="ECO:0007669"/>
    <property type="project" value="TreeGrafter"/>
</dbReference>
<dbReference type="GO" id="GO:0005615">
    <property type="term" value="C:extracellular space"/>
    <property type="evidence" value="ECO:0007669"/>
    <property type="project" value="InterPro"/>
</dbReference>
<dbReference type="GO" id="GO:0005886">
    <property type="term" value="C:plasma membrane"/>
    <property type="evidence" value="ECO:0007669"/>
    <property type="project" value="TreeGrafter"/>
</dbReference>
<dbReference type="GO" id="GO:0055037">
    <property type="term" value="C:recycling endosome"/>
    <property type="evidence" value="ECO:0007669"/>
    <property type="project" value="TreeGrafter"/>
</dbReference>
<dbReference type="GO" id="GO:0046872">
    <property type="term" value="F:metal ion binding"/>
    <property type="evidence" value="ECO:0007669"/>
    <property type="project" value="UniProtKB-KW"/>
</dbReference>
<dbReference type="GO" id="GO:0019731">
    <property type="term" value="P:antibacterial humoral response"/>
    <property type="evidence" value="ECO:0007669"/>
    <property type="project" value="TreeGrafter"/>
</dbReference>
<dbReference type="GO" id="GO:0006826">
    <property type="term" value="P:iron ion transport"/>
    <property type="evidence" value="ECO:0007669"/>
    <property type="project" value="UniProtKB-KW"/>
</dbReference>
<dbReference type="FunFam" id="3.40.190.10:FF:000095">
    <property type="entry name" value="Lactotransferrin"/>
    <property type="match status" value="2"/>
</dbReference>
<dbReference type="Gene3D" id="3.40.190.10">
    <property type="entry name" value="Periplasmic binding protein-like II"/>
    <property type="match status" value="4"/>
</dbReference>
<dbReference type="InterPro" id="IPR016357">
    <property type="entry name" value="Transferrin"/>
</dbReference>
<dbReference type="InterPro" id="IPR001156">
    <property type="entry name" value="Transferrin-like_dom"/>
</dbReference>
<dbReference type="InterPro" id="IPR018195">
    <property type="entry name" value="Transferrin_Fe_BS"/>
</dbReference>
<dbReference type="PANTHER" id="PTHR11485:SF31">
    <property type="entry name" value="SEROTRANSFERRIN"/>
    <property type="match status" value="1"/>
</dbReference>
<dbReference type="PANTHER" id="PTHR11485">
    <property type="entry name" value="TRANSFERRIN"/>
    <property type="match status" value="1"/>
</dbReference>
<dbReference type="Pfam" id="PF00405">
    <property type="entry name" value="Transferrin"/>
    <property type="match status" value="2"/>
</dbReference>
<dbReference type="PIRSF" id="PIRSF002549">
    <property type="entry name" value="Transferrin"/>
    <property type="match status" value="1"/>
</dbReference>
<dbReference type="PRINTS" id="PR00422">
    <property type="entry name" value="TRANSFERRIN"/>
</dbReference>
<dbReference type="SMART" id="SM00094">
    <property type="entry name" value="TR_FER"/>
    <property type="match status" value="2"/>
</dbReference>
<dbReference type="SUPFAM" id="SSF53850">
    <property type="entry name" value="Periplasmic binding protein-like II"/>
    <property type="match status" value="2"/>
</dbReference>
<dbReference type="PROSITE" id="PS00205">
    <property type="entry name" value="TRANSFERRIN_LIKE_1"/>
    <property type="match status" value="2"/>
</dbReference>
<dbReference type="PROSITE" id="PS00206">
    <property type="entry name" value="TRANSFERRIN_LIKE_2"/>
    <property type="match status" value="2"/>
</dbReference>
<dbReference type="PROSITE" id="PS00207">
    <property type="entry name" value="TRANSFERRIN_LIKE_3"/>
    <property type="match status" value="1"/>
</dbReference>
<dbReference type="PROSITE" id="PS51408">
    <property type="entry name" value="TRANSFERRIN_LIKE_4"/>
    <property type="match status" value="2"/>
</dbReference>
<comment type="function">
    <text>Transferrins are iron binding transport proteins which can bind two Fe(3+) ions in association with the binding of an anion, usually bicarbonate. It is responsible for the transport of iron from sites of absorption and heme degradation to those of storage and utilization. Serum transferrin may also have a further role in stimulating cell proliferation.</text>
</comment>
<comment type="subunit">
    <text>Monomer.</text>
</comment>
<comment type="subcellular location">
    <subcellularLocation>
        <location>Secreted</location>
    </subcellularLocation>
</comment>
<comment type="tissue specificity">
    <text>Abundant in liver and serum with smaller amounts found in the stomach and kidney.</text>
</comment>
<comment type="similarity">
    <text evidence="2">Belongs to the transferrin family.</text>
</comment>
<accession>P80429</accession>